<evidence type="ECO:0000255" key="1">
    <source>
        <dbReference type="HAMAP-Rule" id="MF_01077"/>
    </source>
</evidence>
<organism>
    <name type="scientific">Neisseria gonorrhoeae (strain ATCC 700825 / FA 1090)</name>
    <dbReference type="NCBI Taxonomy" id="242231"/>
    <lineage>
        <taxon>Bacteria</taxon>
        <taxon>Pseudomonadati</taxon>
        <taxon>Pseudomonadota</taxon>
        <taxon>Betaproteobacteria</taxon>
        <taxon>Neisseriales</taxon>
        <taxon>Neisseriaceae</taxon>
        <taxon>Neisseria</taxon>
    </lineage>
</organism>
<protein>
    <recommendedName>
        <fullName evidence="1">Ribosome maturation factor RimP</fullName>
    </recommendedName>
</protein>
<keyword id="KW-0963">Cytoplasm</keyword>
<keyword id="KW-1185">Reference proteome</keyword>
<keyword id="KW-0690">Ribosome biogenesis</keyword>
<name>RIMP_NEIG1</name>
<feature type="chain" id="PRO_0000229254" description="Ribosome maturation factor RimP">
    <location>
        <begin position="1"/>
        <end position="143"/>
    </location>
</feature>
<accession>Q5F799</accession>
<sequence length="143" mass="15821">MDIQTILEKTLPGLGYELVDFELAAQGTLRVFIDKEGGITVEDCATVSNHLSRVFMVEDIGYKNLEISSPGLDRPLKKAADFVRFAGQNAKIKTRLPIGGQKNFIGKIEGCENDTVTVSFDGKTVQIELGNIDKARLRPEFKF</sequence>
<comment type="function">
    <text evidence="1">Required for maturation of 30S ribosomal subunits.</text>
</comment>
<comment type="subcellular location">
    <subcellularLocation>
        <location evidence="1">Cytoplasm</location>
    </subcellularLocation>
</comment>
<comment type="similarity">
    <text evidence="1">Belongs to the RimP family.</text>
</comment>
<gene>
    <name evidence="1" type="primary">rimP</name>
    <name type="ordered locus">NGO_1284</name>
</gene>
<proteinExistence type="inferred from homology"/>
<dbReference type="EMBL" id="AE004969">
    <property type="protein sequence ID" value="AAW89938.2"/>
    <property type="molecule type" value="Genomic_DNA"/>
</dbReference>
<dbReference type="RefSeq" id="WP_010358796.1">
    <property type="nucleotide sequence ID" value="NC_002946.2"/>
</dbReference>
<dbReference type="SMR" id="Q5F799"/>
<dbReference type="STRING" id="242231.NGO_1284"/>
<dbReference type="GeneID" id="66753483"/>
<dbReference type="KEGG" id="ngo:NGO_1284"/>
<dbReference type="PATRIC" id="fig|242231.10.peg.1510"/>
<dbReference type="HOGENOM" id="CLU_070525_1_0_4"/>
<dbReference type="Proteomes" id="UP000000535">
    <property type="component" value="Chromosome"/>
</dbReference>
<dbReference type="GO" id="GO:0005829">
    <property type="term" value="C:cytosol"/>
    <property type="evidence" value="ECO:0007669"/>
    <property type="project" value="TreeGrafter"/>
</dbReference>
<dbReference type="GO" id="GO:0000028">
    <property type="term" value="P:ribosomal small subunit assembly"/>
    <property type="evidence" value="ECO:0007669"/>
    <property type="project" value="TreeGrafter"/>
</dbReference>
<dbReference type="GO" id="GO:0006412">
    <property type="term" value="P:translation"/>
    <property type="evidence" value="ECO:0007669"/>
    <property type="project" value="TreeGrafter"/>
</dbReference>
<dbReference type="CDD" id="cd01734">
    <property type="entry name" value="YlxS_C"/>
    <property type="match status" value="1"/>
</dbReference>
<dbReference type="Gene3D" id="2.30.30.180">
    <property type="entry name" value="Ribosome maturation factor RimP, C-terminal domain"/>
    <property type="match status" value="1"/>
</dbReference>
<dbReference type="Gene3D" id="3.30.300.70">
    <property type="entry name" value="RimP-like superfamily, N-terminal"/>
    <property type="match status" value="1"/>
</dbReference>
<dbReference type="HAMAP" id="MF_01077">
    <property type="entry name" value="RimP"/>
    <property type="match status" value="1"/>
</dbReference>
<dbReference type="InterPro" id="IPR003728">
    <property type="entry name" value="Ribosome_maturation_RimP"/>
</dbReference>
<dbReference type="InterPro" id="IPR028998">
    <property type="entry name" value="RimP_C"/>
</dbReference>
<dbReference type="InterPro" id="IPR036847">
    <property type="entry name" value="RimP_C_sf"/>
</dbReference>
<dbReference type="InterPro" id="IPR028989">
    <property type="entry name" value="RimP_N"/>
</dbReference>
<dbReference type="InterPro" id="IPR035956">
    <property type="entry name" value="RimP_N_sf"/>
</dbReference>
<dbReference type="NCBIfam" id="NF000929">
    <property type="entry name" value="PRK00092.2-1"/>
    <property type="match status" value="1"/>
</dbReference>
<dbReference type="PANTHER" id="PTHR33867">
    <property type="entry name" value="RIBOSOME MATURATION FACTOR RIMP"/>
    <property type="match status" value="1"/>
</dbReference>
<dbReference type="PANTHER" id="PTHR33867:SF1">
    <property type="entry name" value="RIBOSOME MATURATION FACTOR RIMP"/>
    <property type="match status" value="1"/>
</dbReference>
<dbReference type="Pfam" id="PF17384">
    <property type="entry name" value="DUF150_C"/>
    <property type="match status" value="1"/>
</dbReference>
<dbReference type="Pfam" id="PF02576">
    <property type="entry name" value="RimP_N"/>
    <property type="match status" value="1"/>
</dbReference>
<dbReference type="SUPFAM" id="SSF74942">
    <property type="entry name" value="YhbC-like, C-terminal domain"/>
    <property type="match status" value="1"/>
</dbReference>
<dbReference type="SUPFAM" id="SSF75420">
    <property type="entry name" value="YhbC-like, N-terminal domain"/>
    <property type="match status" value="1"/>
</dbReference>
<reference key="1">
    <citation type="submission" date="2003-03" db="EMBL/GenBank/DDBJ databases">
        <title>The complete genome sequence of Neisseria gonorrhoeae.</title>
        <authorList>
            <person name="Lewis L.A."/>
            <person name="Gillaspy A.F."/>
            <person name="McLaughlin R.E."/>
            <person name="Gipson M."/>
            <person name="Ducey T.F."/>
            <person name="Ownbey T."/>
            <person name="Hartman K."/>
            <person name="Nydick C."/>
            <person name="Carson M.B."/>
            <person name="Vaughn J."/>
            <person name="Thomson C."/>
            <person name="Song L."/>
            <person name="Lin S."/>
            <person name="Yuan X."/>
            <person name="Najar F."/>
            <person name="Zhan M."/>
            <person name="Ren Q."/>
            <person name="Zhu H."/>
            <person name="Qi S."/>
            <person name="Kenton S.M."/>
            <person name="Lai H."/>
            <person name="White J.D."/>
            <person name="Clifton S."/>
            <person name="Roe B.A."/>
            <person name="Dyer D.W."/>
        </authorList>
    </citation>
    <scope>NUCLEOTIDE SEQUENCE [LARGE SCALE GENOMIC DNA]</scope>
    <source>
        <strain>ATCC 700825 / FA 1090</strain>
    </source>
</reference>